<protein>
    <recommendedName>
        <fullName evidence="1">ATP synthase subunit a 1</fullName>
    </recommendedName>
    <alternativeName>
        <fullName evidence="1">ATP synthase F0 sector subunit a 1</fullName>
    </alternativeName>
    <alternativeName>
        <fullName evidence="1">F-ATPase subunit 6 1</fullName>
    </alternativeName>
</protein>
<dbReference type="EMBL" id="CR378674">
    <property type="protein sequence ID" value="CAG21866.1"/>
    <property type="molecule type" value="Genomic_DNA"/>
</dbReference>
<dbReference type="RefSeq" id="WP_011220102.1">
    <property type="nucleotide sequence ID" value="NC_006370.1"/>
</dbReference>
<dbReference type="SMR" id="Q6LLG2"/>
<dbReference type="STRING" id="298386.PBPRA3610"/>
<dbReference type="KEGG" id="ppr:PBPRA3610"/>
<dbReference type="eggNOG" id="COG0356">
    <property type="taxonomic scope" value="Bacteria"/>
</dbReference>
<dbReference type="HOGENOM" id="CLU_041018_1_0_6"/>
<dbReference type="Proteomes" id="UP000000593">
    <property type="component" value="Chromosome 1"/>
</dbReference>
<dbReference type="GO" id="GO:0005886">
    <property type="term" value="C:plasma membrane"/>
    <property type="evidence" value="ECO:0007669"/>
    <property type="project" value="UniProtKB-SubCell"/>
</dbReference>
<dbReference type="GO" id="GO:0045259">
    <property type="term" value="C:proton-transporting ATP synthase complex"/>
    <property type="evidence" value="ECO:0007669"/>
    <property type="project" value="UniProtKB-KW"/>
</dbReference>
<dbReference type="GO" id="GO:0046933">
    <property type="term" value="F:proton-transporting ATP synthase activity, rotational mechanism"/>
    <property type="evidence" value="ECO:0007669"/>
    <property type="project" value="UniProtKB-UniRule"/>
</dbReference>
<dbReference type="GO" id="GO:0042777">
    <property type="term" value="P:proton motive force-driven plasma membrane ATP synthesis"/>
    <property type="evidence" value="ECO:0007669"/>
    <property type="project" value="TreeGrafter"/>
</dbReference>
<dbReference type="CDD" id="cd00310">
    <property type="entry name" value="ATP-synt_Fo_a_6"/>
    <property type="match status" value="1"/>
</dbReference>
<dbReference type="FunFam" id="1.20.120.220:FF:000002">
    <property type="entry name" value="ATP synthase subunit a"/>
    <property type="match status" value="1"/>
</dbReference>
<dbReference type="Gene3D" id="1.20.120.220">
    <property type="entry name" value="ATP synthase, F0 complex, subunit A"/>
    <property type="match status" value="1"/>
</dbReference>
<dbReference type="HAMAP" id="MF_01393">
    <property type="entry name" value="ATP_synth_a_bact"/>
    <property type="match status" value="1"/>
</dbReference>
<dbReference type="InterPro" id="IPR045082">
    <property type="entry name" value="ATP_syn_F0_a_bact/chloroplast"/>
</dbReference>
<dbReference type="InterPro" id="IPR000568">
    <property type="entry name" value="ATP_synth_F0_asu"/>
</dbReference>
<dbReference type="InterPro" id="IPR023011">
    <property type="entry name" value="ATP_synth_F0_asu_AS"/>
</dbReference>
<dbReference type="InterPro" id="IPR035908">
    <property type="entry name" value="F0_ATP_A_sf"/>
</dbReference>
<dbReference type="NCBIfam" id="TIGR01131">
    <property type="entry name" value="ATP_synt_6_or_A"/>
    <property type="match status" value="1"/>
</dbReference>
<dbReference type="NCBIfam" id="NF004477">
    <property type="entry name" value="PRK05815.1-1"/>
    <property type="match status" value="1"/>
</dbReference>
<dbReference type="PANTHER" id="PTHR42823">
    <property type="entry name" value="ATP SYNTHASE SUBUNIT A, CHLOROPLASTIC"/>
    <property type="match status" value="1"/>
</dbReference>
<dbReference type="PANTHER" id="PTHR42823:SF3">
    <property type="entry name" value="ATP SYNTHASE SUBUNIT A, CHLOROPLASTIC"/>
    <property type="match status" value="1"/>
</dbReference>
<dbReference type="Pfam" id="PF00119">
    <property type="entry name" value="ATP-synt_A"/>
    <property type="match status" value="1"/>
</dbReference>
<dbReference type="PRINTS" id="PR00123">
    <property type="entry name" value="ATPASEA"/>
</dbReference>
<dbReference type="SUPFAM" id="SSF81336">
    <property type="entry name" value="F1F0 ATP synthase subunit A"/>
    <property type="match status" value="1"/>
</dbReference>
<dbReference type="PROSITE" id="PS00449">
    <property type="entry name" value="ATPASE_A"/>
    <property type="match status" value="1"/>
</dbReference>
<reference key="1">
    <citation type="journal article" date="2005" name="Science">
        <title>Life at depth: Photobacterium profundum genome sequence and expression analysis.</title>
        <authorList>
            <person name="Vezzi A."/>
            <person name="Campanaro S."/>
            <person name="D'Angelo M."/>
            <person name="Simonato F."/>
            <person name="Vitulo N."/>
            <person name="Lauro F.M."/>
            <person name="Cestaro A."/>
            <person name="Malacrida G."/>
            <person name="Simionati B."/>
            <person name="Cannata N."/>
            <person name="Romualdi C."/>
            <person name="Bartlett D.H."/>
            <person name="Valle G."/>
        </authorList>
    </citation>
    <scope>NUCLEOTIDE SEQUENCE [LARGE SCALE GENOMIC DNA]</scope>
    <source>
        <strain>ATCC BAA-1253 / SS9</strain>
    </source>
</reference>
<name>ATP61_PHOPR</name>
<sequence length="262" mass="28963">MAAPGEALTSSSYITHHLTNLAVGDGGFWTVHIDSLFFSVLTGLAFILVFHSVAKKATSGVPSKLQCFVEMLVEFVDNSVKETFHGRNPLIAPLGLTIFCWIMLMNIMDLIPIDFIPYAAEHALGIPYLKIVPTADVNITMAMALGVFALMLYYSVKVKGLGGFAKELALHPFNHPIMIPFNLLLEVVSLIAKPISLGMRLFGNMFAGEVVFILIAALMPWWAQWLGSVPWAIFHILIITIQAFVFMMLTIVYLAQAHEDNH</sequence>
<feature type="chain" id="PRO_0000362371" description="ATP synthase subunit a 1">
    <location>
        <begin position="1"/>
        <end position="262"/>
    </location>
</feature>
<feature type="transmembrane region" description="Helical" evidence="1">
    <location>
        <begin position="30"/>
        <end position="50"/>
    </location>
</feature>
<feature type="transmembrane region" description="Helical" evidence="1">
    <location>
        <begin position="91"/>
        <end position="111"/>
    </location>
</feature>
<feature type="transmembrane region" description="Helical" evidence="1">
    <location>
        <begin position="131"/>
        <end position="151"/>
    </location>
</feature>
<feature type="transmembrane region" description="Helical" evidence="1">
    <location>
        <begin position="201"/>
        <end position="221"/>
    </location>
</feature>
<feature type="transmembrane region" description="Helical" evidence="1">
    <location>
        <begin position="232"/>
        <end position="252"/>
    </location>
</feature>
<accession>Q6LLG2</accession>
<gene>
    <name evidence="1" type="primary">atpB1</name>
    <name type="ordered locus">PBPRA3610</name>
</gene>
<organism>
    <name type="scientific">Photobacterium profundum (strain SS9)</name>
    <dbReference type="NCBI Taxonomy" id="298386"/>
    <lineage>
        <taxon>Bacteria</taxon>
        <taxon>Pseudomonadati</taxon>
        <taxon>Pseudomonadota</taxon>
        <taxon>Gammaproteobacteria</taxon>
        <taxon>Vibrionales</taxon>
        <taxon>Vibrionaceae</taxon>
        <taxon>Photobacterium</taxon>
    </lineage>
</organism>
<proteinExistence type="inferred from homology"/>
<keyword id="KW-0066">ATP synthesis</keyword>
<keyword id="KW-0997">Cell inner membrane</keyword>
<keyword id="KW-1003">Cell membrane</keyword>
<keyword id="KW-0138">CF(0)</keyword>
<keyword id="KW-0375">Hydrogen ion transport</keyword>
<keyword id="KW-0406">Ion transport</keyword>
<keyword id="KW-0472">Membrane</keyword>
<keyword id="KW-1185">Reference proteome</keyword>
<keyword id="KW-0812">Transmembrane</keyword>
<keyword id="KW-1133">Transmembrane helix</keyword>
<keyword id="KW-0813">Transport</keyword>
<comment type="function">
    <text evidence="1">Key component of the proton channel; it plays a direct role in the translocation of protons across the membrane.</text>
</comment>
<comment type="subunit">
    <text evidence="1">F-type ATPases have 2 components, CF(1) - the catalytic core - and CF(0) - the membrane proton channel. CF(1) has five subunits: alpha(3), beta(3), gamma(1), delta(1), epsilon(1). CF(0) has three main subunits: a(1), b(2) and c(9-12). The alpha and beta chains form an alternating ring which encloses part of the gamma chain. CF(1) is attached to CF(0) by a central stalk formed by the gamma and epsilon chains, while a peripheral stalk is formed by the delta and b chains.</text>
</comment>
<comment type="subcellular location">
    <subcellularLocation>
        <location evidence="1">Cell inner membrane</location>
        <topology evidence="1">Multi-pass membrane protein</topology>
    </subcellularLocation>
</comment>
<comment type="similarity">
    <text evidence="1">Belongs to the ATPase A chain family.</text>
</comment>
<evidence type="ECO:0000255" key="1">
    <source>
        <dbReference type="HAMAP-Rule" id="MF_01393"/>
    </source>
</evidence>